<geneLocation type="chloroplast"/>
<organism>
    <name type="scientific">Cucumis sativus</name>
    <name type="common">Cucumber</name>
    <dbReference type="NCBI Taxonomy" id="3659"/>
    <lineage>
        <taxon>Eukaryota</taxon>
        <taxon>Viridiplantae</taxon>
        <taxon>Streptophyta</taxon>
        <taxon>Embryophyta</taxon>
        <taxon>Tracheophyta</taxon>
        <taxon>Spermatophyta</taxon>
        <taxon>Magnoliopsida</taxon>
        <taxon>eudicotyledons</taxon>
        <taxon>Gunneridae</taxon>
        <taxon>Pentapetalae</taxon>
        <taxon>rosids</taxon>
        <taxon>fabids</taxon>
        <taxon>Cucurbitales</taxon>
        <taxon>Cucurbitaceae</taxon>
        <taxon>Benincaseae</taxon>
        <taxon>Cucumis</taxon>
    </lineage>
</organism>
<evidence type="ECO:0000255" key="1">
    <source>
        <dbReference type="HAMAP-Rule" id="MF_00270"/>
    </source>
</evidence>
<evidence type="ECO:0000256" key="2">
    <source>
        <dbReference type="SAM" id="MobiDB-lite"/>
    </source>
</evidence>
<evidence type="ECO:0000305" key="3"/>
<dbReference type="EMBL" id="DQ119058">
    <property type="protein sequence ID" value="AAZ94673.1"/>
    <property type="molecule type" value="Genomic_DNA"/>
</dbReference>
<dbReference type="EMBL" id="AJ970307">
    <property type="protein sequence ID" value="CAJ00780.1"/>
    <property type="molecule type" value="Genomic_DNA"/>
</dbReference>
<dbReference type="EMBL" id="DQ865975">
    <property type="protein sequence ID" value="ABI97439.1"/>
    <property type="molecule type" value="Genomic_DNA"/>
</dbReference>
<dbReference type="EMBL" id="DQ865976">
    <property type="protein sequence ID" value="ABI98767.1"/>
    <property type="molecule type" value="Genomic_DNA"/>
</dbReference>
<dbReference type="RefSeq" id="YP_247621.1">
    <property type="nucleotide sequence ID" value="NC_007144.1"/>
</dbReference>
<dbReference type="SMR" id="Q4VZJ5"/>
<dbReference type="GeneID" id="3429311"/>
<dbReference type="KEGG" id="csv:3429311"/>
<dbReference type="OrthoDB" id="21463at2759"/>
<dbReference type="GO" id="GO:0009507">
    <property type="term" value="C:chloroplast"/>
    <property type="evidence" value="ECO:0007669"/>
    <property type="project" value="UniProtKB-SubCell"/>
</dbReference>
<dbReference type="GO" id="GO:1990904">
    <property type="term" value="C:ribonucleoprotein complex"/>
    <property type="evidence" value="ECO:0007669"/>
    <property type="project" value="UniProtKB-KW"/>
</dbReference>
<dbReference type="GO" id="GO:0005840">
    <property type="term" value="C:ribosome"/>
    <property type="evidence" value="ECO:0007669"/>
    <property type="project" value="UniProtKB-KW"/>
</dbReference>
<dbReference type="GO" id="GO:0019843">
    <property type="term" value="F:rRNA binding"/>
    <property type="evidence" value="ECO:0007669"/>
    <property type="project" value="UniProtKB-UniRule"/>
</dbReference>
<dbReference type="GO" id="GO:0003735">
    <property type="term" value="F:structural constituent of ribosome"/>
    <property type="evidence" value="ECO:0007669"/>
    <property type="project" value="InterPro"/>
</dbReference>
<dbReference type="GO" id="GO:0006412">
    <property type="term" value="P:translation"/>
    <property type="evidence" value="ECO:0007669"/>
    <property type="project" value="UniProtKB-UniRule"/>
</dbReference>
<dbReference type="FunFam" id="4.10.640.10:FF:000002">
    <property type="entry name" value="30S ribosomal protein S18, chloroplastic"/>
    <property type="match status" value="1"/>
</dbReference>
<dbReference type="Gene3D" id="4.10.640.10">
    <property type="entry name" value="Ribosomal protein S18"/>
    <property type="match status" value="1"/>
</dbReference>
<dbReference type="HAMAP" id="MF_00270">
    <property type="entry name" value="Ribosomal_bS18"/>
    <property type="match status" value="1"/>
</dbReference>
<dbReference type="InterPro" id="IPR001648">
    <property type="entry name" value="Ribosomal_bS18"/>
</dbReference>
<dbReference type="InterPro" id="IPR018275">
    <property type="entry name" value="Ribosomal_bS18_CS"/>
</dbReference>
<dbReference type="InterPro" id="IPR036870">
    <property type="entry name" value="Ribosomal_bS18_sf"/>
</dbReference>
<dbReference type="NCBIfam" id="TIGR00165">
    <property type="entry name" value="S18"/>
    <property type="match status" value="1"/>
</dbReference>
<dbReference type="PANTHER" id="PTHR13479">
    <property type="entry name" value="30S RIBOSOMAL PROTEIN S18"/>
    <property type="match status" value="1"/>
</dbReference>
<dbReference type="PANTHER" id="PTHR13479:SF40">
    <property type="entry name" value="SMALL RIBOSOMAL SUBUNIT PROTEIN BS18M"/>
    <property type="match status" value="1"/>
</dbReference>
<dbReference type="Pfam" id="PF01084">
    <property type="entry name" value="Ribosomal_S18"/>
    <property type="match status" value="1"/>
</dbReference>
<dbReference type="PRINTS" id="PR00974">
    <property type="entry name" value="RIBOSOMALS18"/>
</dbReference>
<dbReference type="SUPFAM" id="SSF46911">
    <property type="entry name" value="Ribosomal protein S18"/>
    <property type="match status" value="1"/>
</dbReference>
<dbReference type="PROSITE" id="PS00057">
    <property type="entry name" value="RIBOSOMAL_S18"/>
    <property type="match status" value="1"/>
</dbReference>
<proteinExistence type="inferred from homology"/>
<feature type="chain" id="PRO_0000276865" description="Small ribosomal subunit protein bS18c">
    <location>
        <begin position="1"/>
        <end position="104"/>
    </location>
</feature>
<feature type="region of interest" description="Disordered" evidence="2">
    <location>
        <begin position="84"/>
        <end position="104"/>
    </location>
</feature>
<sequence>MDKSKRLFLKSKRSFRRRLPPIPSGDRIDYRNMSLISRFISEQGKILSRRVNRLTLKQQRLITIAIKQARILSLLPFLNNDKNDKQFERSESTPRTIGLRTRNK</sequence>
<comment type="subunit">
    <text>Part of the 30S ribosomal subunit.</text>
</comment>
<comment type="subcellular location">
    <subcellularLocation>
        <location>Plastid</location>
        <location>Chloroplast</location>
    </subcellularLocation>
</comment>
<comment type="similarity">
    <text evidence="1">Belongs to the bacterial ribosomal protein bS18 family.</text>
</comment>
<gene>
    <name evidence="1" type="primary">rps18</name>
    <name type="ordered locus">CsCp064</name>
</gene>
<reference key="1">
    <citation type="journal article" date="2006" name="Plant Cell Rep.">
        <title>Complete sequence and organization of the cucumber (Cucumis sativus L. cv. Baekmibaekdadagi) chloroplast genome.</title>
        <authorList>
            <person name="Kim J.-S."/>
            <person name="Jung J.D."/>
            <person name="Lee J.-A."/>
            <person name="Park H.-W."/>
            <person name="Oh K.-H."/>
            <person name="Jeong W.J."/>
            <person name="Choi D.-W."/>
            <person name="Liu J.R."/>
            <person name="Cho K.Y."/>
        </authorList>
    </citation>
    <scope>NUCLEOTIDE SEQUENCE [LARGE SCALE GENOMIC DNA]</scope>
    <source>
        <strain>cv. Baekmibaekdadagi</strain>
    </source>
</reference>
<reference key="2">
    <citation type="journal article" date="2007" name="Cell. Mol. Biol. Lett.">
        <title>The complete structure of the cucumber (Cucumis sativus L.) chloroplast genome: its composition and comparative analysis.</title>
        <authorList>
            <person name="Plader W.W."/>
            <person name="Yukawa Y."/>
            <person name="Sugiura M."/>
            <person name="Malepszy S."/>
        </authorList>
    </citation>
    <scope>NUCLEOTIDE SEQUENCE [LARGE SCALE GENOMIC DNA]</scope>
    <source>
        <strain>cv. Borszczagowski</strain>
    </source>
</reference>
<reference key="3">
    <citation type="journal article" date="2007" name="Genome">
        <title>Sequencing cucumber (Cucumis sativus L.) chloroplast genomes identifies differences between chilling-tolerant and -susceptible cucumber lines.</title>
        <authorList>
            <person name="Chung S.-M."/>
            <person name="Gordon V.S."/>
            <person name="Staub J.E."/>
        </authorList>
    </citation>
    <scope>NUCLEOTIDE SEQUENCE [LARGE SCALE GENOMIC DNA]</scope>
    <source>
        <strain>cv. Chipper</strain>
        <strain>cv. Gy14</strain>
    </source>
</reference>
<accession>Q4VZJ5</accession>
<accession>A5J1V6</accession>
<name>RR18_CUCSA</name>
<keyword id="KW-0150">Chloroplast</keyword>
<keyword id="KW-0934">Plastid</keyword>
<keyword id="KW-0687">Ribonucleoprotein</keyword>
<keyword id="KW-0689">Ribosomal protein</keyword>
<keyword id="KW-0694">RNA-binding</keyword>
<keyword id="KW-0699">rRNA-binding</keyword>
<protein>
    <recommendedName>
        <fullName evidence="1">Small ribosomal subunit protein bS18c</fullName>
    </recommendedName>
    <alternativeName>
        <fullName evidence="3">30S ribosomal protein S18, chloroplastic</fullName>
    </alternativeName>
</protein>